<name>RL15_LACPL</name>
<protein>
    <recommendedName>
        <fullName evidence="1">Large ribosomal subunit protein uL15</fullName>
    </recommendedName>
    <alternativeName>
        <fullName evidence="3">50S ribosomal protein L15</fullName>
    </alternativeName>
</protein>
<evidence type="ECO:0000255" key="1">
    <source>
        <dbReference type="HAMAP-Rule" id="MF_01341"/>
    </source>
</evidence>
<evidence type="ECO:0000256" key="2">
    <source>
        <dbReference type="SAM" id="MobiDB-lite"/>
    </source>
</evidence>
<evidence type="ECO:0000305" key="3"/>
<sequence>MKLHELTPSEGSRFSRRRIGRGDSSGQGKTSGRGQKGQKARGKVRVGFEGGQMPLYRRIPKRGFTNINRKEYAVVNLDGLNRFDDGAEVTPESLKEAGLVKKSSAVKVLGNGKLNKKLTVKASKFSATAVAAIEAAGGKTEVI</sequence>
<feature type="chain" id="PRO_0000104737" description="Large ribosomal subunit protein uL15">
    <location>
        <begin position="1"/>
        <end position="143"/>
    </location>
</feature>
<feature type="region of interest" description="Disordered" evidence="2">
    <location>
        <begin position="1"/>
        <end position="47"/>
    </location>
</feature>
<feature type="compositionally biased region" description="Gly residues" evidence="2">
    <location>
        <begin position="23"/>
        <end position="35"/>
    </location>
</feature>
<organism>
    <name type="scientific">Lactiplantibacillus plantarum (strain ATCC BAA-793 / NCIMB 8826 / WCFS1)</name>
    <name type="common">Lactobacillus plantarum</name>
    <dbReference type="NCBI Taxonomy" id="220668"/>
    <lineage>
        <taxon>Bacteria</taxon>
        <taxon>Bacillati</taxon>
        <taxon>Bacillota</taxon>
        <taxon>Bacilli</taxon>
        <taxon>Lactobacillales</taxon>
        <taxon>Lactobacillaceae</taxon>
        <taxon>Lactiplantibacillus</taxon>
    </lineage>
</organism>
<gene>
    <name evidence="1" type="primary">rplO</name>
    <name type="ordered locus">lp_1055</name>
</gene>
<proteinExistence type="inferred from homology"/>
<comment type="function">
    <text evidence="1">Binds to the 23S rRNA.</text>
</comment>
<comment type="subunit">
    <text evidence="1">Part of the 50S ribosomal subunit.</text>
</comment>
<comment type="similarity">
    <text evidence="1">Belongs to the universal ribosomal protein uL15 family.</text>
</comment>
<reference key="1">
    <citation type="journal article" date="2003" name="Proc. Natl. Acad. Sci. U.S.A.">
        <title>Complete genome sequence of Lactobacillus plantarum WCFS1.</title>
        <authorList>
            <person name="Kleerebezem M."/>
            <person name="Boekhorst J."/>
            <person name="van Kranenburg R."/>
            <person name="Molenaar D."/>
            <person name="Kuipers O.P."/>
            <person name="Leer R."/>
            <person name="Tarchini R."/>
            <person name="Peters S.A."/>
            <person name="Sandbrink H.M."/>
            <person name="Fiers M.W.E.J."/>
            <person name="Stiekema W."/>
            <person name="Klein Lankhorst R.M."/>
            <person name="Bron P.A."/>
            <person name="Hoffer S.M."/>
            <person name="Nierop Groot M.N."/>
            <person name="Kerkhoven R."/>
            <person name="De Vries M."/>
            <person name="Ursing B."/>
            <person name="De Vos W.M."/>
            <person name="Siezen R.J."/>
        </authorList>
    </citation>
    <scope>NUCLEOTIDE SEQUENCE [LARGE SCALE GENOMIC DNA]</scope>
    <source>
        <strain>ATCC BAA-793 / NCIMB 8826 / WCFS1</strain>
    </source>
</reference>
<reference key="2">
    <citation type="journal article" date="2012" name="J. Bacteriol.">
        <title>Complete resequencing and reannotation of the Lactobacillus plantarum WCFS1 genome.</title>
        <authorList>
            <person name="Siezen R.J."/>
            <person name="Francke C."/>
            <person name="Renckens B."/>
            <person name="Boekhorst J."/>
            <person name="Wels M."/>
            <person name="Kleerebezem M."/>
            <person name="van Hijum S.A."/>
        </authorList>
    </citation>
    <scope>NUCLEOTIDE SEQUENCE [LARGE SCALE GENOMIC DNA]</scope>
    <scope>GENOME REANNOTATION</scope>
    <source>
        <strain>ATCC BAA-793 / NCIMB 8826 / WCFS1</strain>
    </source>
</reference>
<accession>Q88XW7</accession>
<accession>F9UMM4</accession>
<keyword id="KW-1185">Reference proteome</keyword>
<keyword id="KW-0687">Ribonucleoprotein</keyword>
<keyword id="KW-0689">Ribosomal protein</keyword>
<keyword id="KW-0694">RNA-binding</keyword>
<keyword id="KW-0699">rRNA-binding</keyword>
<dbReference type="EMBL" id="AL935263">
    <property type="protein sequence ID" value="CCC78463.1"/>
    <property type="molecule type" value="Genomic_DNA"/>
</dbReference>
<dbReference type="RefSeq" id="WP_003638079.1">
    <property type="nucleotide sequence ID" value="NC_004567.2"/>
</dbReference>
<dbReference type="RefSeq" id="YP_004888977.1">
    <property type="nucleotide sequence ID" value="NC_004567.2"/>
</dbReference>
<dbReference type="SMR" id="Q88XW7"/>
<dbReference type="STRING" id="220668.lp_1055"/>
<dbReference type="EnsemblBacteria" id="CCC78463">
    <property type="protein sequence ID" value="CCC78463"/>
    <property type="gene ID" value="lp_1055"/>
</dbReference>
<dbReference type="GeneID" id="89668566"/>
<dbReference type="KEGG" id="lpl:lp_1055"/>
<dbReference type="PATRIC" id="fig|220668.9.peg.890"/>
<dbReference type="eggNOG" id="COG0200">
    <property type="taxonomic scope" value="Bacteria"/>
</dbReference>
<dbReference type="HOGENOM" id="CLU_055188_4_2_9"/>
<dbReference type="OrthoDB" id="9810293at2"/>
<dbReference type="PhylomeDB" id="Q88XW7"/>
<dbReference type="Proteomes" id="UP000000432">
    <property type="component" value="Chromosome"/>
</dbReference>
<dbReference type="GO" id="GO:0022625">
    <property type="term" value="C:cytosolic large ribosomal subunit"/>
    <property type="evidence" value="ECO:0007669"/>
    <property type="project" value="TreeGrafter"/>
</dbReference>
<dbReference type="GO" id="GO:0019843">
    <property type="term" value="F:rRNA binding"/>
    <property type="evidence" value="ECO:0007669"/>
    <property type="project" value="UniProtKB-UniRule"/>
</dbReference>
<dbReference type="GO" id="GO:0003735">
    <property type="term" value="F:structural constituent of ribosome"/>
    <property type="evidence" value="ECO:0007669"/>
    <property type="project" value="InterPro"/>
</dbReference>
<dbReference type="GO" id="GO:0006412">
    <property type="term" value="P:translation"/>
    <property type="evidence" value="ECO:0007669"/>
    <property type="project" value="UniProtKB-UniRule"/>
</dbReference>
<dbReference type="Gene3D" id="3.100.10.10">
    <property type="match status" value="1"/>
</dbReference>
<dbReference type="HAMAP" id="MF_01341">
    <property type="entry name" value="Ribosomal_uL15"/>
    <property type="match status" value="1"/>
</dbReference>
<dbReference type="InterPro" id="IPR030878">
    <property type="entry name" value="Ribosomal_uL15"/>
</dbReference>
<dbReference type="InterPro" id="IPR021131">
    <property type="entry name" value="Ribosomal_uL15/eL18"/>
</dbReference>
<dbReference type="InterPro" id="IPR036227">
    <property type="entry name" value="Ribosomal_uL15/eL18_sf"/>
</dbReference>
<dbReference type="InterPro" id="IPR005749">
    <property type="entry name" value="Ribosomal_uL15_bac-type"/>
</dbReference>
<dbReference type="InterPro" id="IPR001196">
    <property type="entry name" value="Ribosomal_uL15_CS"/>
</dbReference>
<dbReference type="NCBIfam" id="TIGR01071">
    <property type="entry name" value="rplO_bact"/>
    <property type="match status" value="1"/>
</dbReference>
<dbReference type="PANTHER" id="PTHR12934">
    <property type="entry name" value="50S RIBOSOMAL PROTEIN L15"/>
    <property type="match status" value="1"/>
</dbReference>
<dbReference type="PANTHER" id="PTHR12934:SF11">
    <property type="entry name" value="LARGE RIBOSOMAL SUBUNIT PROTEIN UL15M"/>
    <property type="match status" value="1"/>
</dbReference>
<dbReference type="Pfam" id="PF00828">
    <property type="entry name" value="Ribosomal_L27A"/>
    <property type="match status" value="1"/>
</dbReference>
<dbReference type="SUPFAM" id="SSF52080">
    <property type="entry name" value="Ribosomal proteins L15p and L18e"/>
    <property type="match status" value="1"/>
</dbReference>
<dbReference type="PROSITE" id="PS00475">
    <property type="entry name" value="RIBOSOMAL_L15"/>
    <property type="match status" value="1"/>
</dbReference>